<accession>Q0T1P7</accession>
<dbReference type="EC" id="4.2.1.11" evidence="1"/>
<dbReference type="EMBL" id="CP000266">
    <property type="protein sequence ID" value="ABF04768.1"/>
    <property type="molecule type" value="Genomic_DNA"/>
</dbReference>
<dbReference type="RefSeq" id="WP_000036721.1">
    <property type="nucleotide sequence ID" value="NC_008258.1"/>
</dbReference>
<dbReference type="SMR" id="Q0T1P7"/>
<dbReference type="KEGG" id="sfv:SFV_2676"/>
<dbReference type="HOGENOM" id="CLU_031223_2_1_6"/>
<dbReference type="UniPathway" id="UPA00109">
    <property type="reaction ID" value="UER00187"/>
</dbReference>
<dbReference type="Proteomes" id="UP000000659">
    <property type="component" value="Chromosome"/>
</dbReference>
<dbReference type="GO" id="GO:0009986">
    <property type="term" value="C:cell surface"/>
    <property type="evidence" value="ECO:0007669"/>
    <property type="project" value="UniProtKB-SubCell"/>
</dbReference>
<dbReference type="GO" id="GO:0005576">
    <property type="term" value="C:extracellular region"/>
    <property type="evidence" value="ECO:0007669"/>
    <property type="project" value="UniProtKB-SubCell"/>
</dbReference>
<dbReference type="GO" id="GO:0000015">
    <property type="term" value="C:phosphopyruvate hydratase complex"/>
    <property type="evidence" value="ECO:0007669"/>
    <property type="project" value="InterPro"/>
</dbReference>
<dbReference type="GO" id="GO:0000287">
    <property type="term" value="F:magnesium ion binding"/>
    <property type="evidence" value="ECO:0007669"/>
    <property type="project" value="UniProtKB-UniRule"/>
</dbReference>
<dbReference type="GO" id="GO:0004634">
    <property type="term" value="F:phosphopyruvate hydratase activity"/>
    <property type="evidence" value="ECO:0007669"/>
    <property type="project" value="UniProtKB-UniRule"/>
</dbReference>
<dbReference type="GO" id="GO:0006096">
    <property type="term" value="P:glycolytic process"/>
    <property type="evidence" value="ECO:0007669"/>
    <property type="project" value="UniProtKB-UniRule"/>
</dbReference>
<dbReference type="CDD" id="cd03313">
    <property type="entry name" value="enolase"/>
    <property type="match status" value="1"/>
</dbReference>
<dbReference type="FunFam" id="3.20.20.120:FF:000001">
    <property type="entry name" value="Enolase"/>
    <property type="match status" value="1"/>
</dbReference>
<dbReference type="FunFam" id="3.30.390.10:FF:000001">
    <property type="entry name" value="Enolase"/>
    <property type="match status" value="1"/>
</dbReference>
<dbReference type="Gene3D" id="3.20.20.120">
    <property type="entry name" value="Enolase-like C-terminal domain"/>
    <property type="match status" value="1"/>
</dbReference>
<dbReference type="Gene3D" id="3.30.390.10">
    <property type="entry name" value="Enolase-like, N-terminal domain"/>
    <property type="match status" value="1"/>
</dbReference>
<dbReference type="HAMAP" id="MF_00318">
    <property type="entry name" value="Enolase"/>
    <property type="match status" value="1"/>
</dbReference>
<dbReference type="InterPro" id="IPR000941">
    <property type="entry name" value="Enolase"/>
</dbReference>
<dbReference type="InterPro" id="IPR036849">
    <property type="entry name" value="Enolase-like_C_sf"/>
</dbReference>
<dbReference type="InterPro" id="IPR029017">
    <property type="entry name" value="Enolase-like_N"/>
</dbReference>
<dbReference type="InterPro" id="IPR020810">
    <property type="entry name" value="Enolase_C"/>
</dbReference>
<dbReference type="InterPro" id="IPR020809">
    <property type="entry name" value="Enolase_CS"/>
</dbReference>
<dbReference type="InterPro" id="IPR020811">
    <property type="entry name" value="Enolase_N"/>
</dbReference>
<dbReference type="NCBIfam" id="TIGR01060">
    <property type="entry name" value="eno"/>
    <property type="match status" value="1"/>
</dbReference>
<dbReference type="PANTHER" id="PTHR11902">
    <property type="entry name" value="ENOLASE"/>
    <property type="match status" value="1"/>
</dbReference>
<dbReference type="PANTHER" id="PTHR11902:SF1">
    <property type="entry name" value="ENOLASE"/>
    <property type="match status" value="1"/>
</dbReference>
<dbReference type="Pfam" id="PF00113">
    <property type="entry name" value="Enolase_C"/>
    <property type="match status" value="1"/>
</dbReference>
<dbReference type="Pfam" id="PF03952">
    <property type="entry name" value="Enolase_N"/>
    <property type="match status" value="1"/>
</dbReference>
<dbReference type="PIRSF" id="PIRSF001400">
    <property type="entry name" value="Enolase"/>
    <property type="match status" value="1"/>
</dbReference>
<dbReference type="PRINTS" id="PR00148">
    <property type="entry name" value="ENOLASE"/>
</dbReference>
<dbReference type="SFLD" id="SFLDS00001">
    <property type="entry name" value="Enolase"/>
    <property type="match status" value="1"/>
</dbReference>
<dbReference type="SFLD" id="SFLDF00002">
    <property type="entry name" value="enolase"/>
    <property type="match status" value="1"/>
</dbReference>
<dbReference type="SMART" id="SM01192">
    <property type="entry name" value="Enolase_C"/>
    <property type="match status" value="1"/>
</dbReference>
<dbReference type="SMART" id="SM01193">
    <property type="entry name" value="Enolase_N"/>
    <property type="match status" value="1"/>
</dbReference>
<dbReference type="SUPFAM" id="SSF51604">
    <property type="entry name" value="Enolase C-terminal domain-like"/>
    <property type="match status" value="1"/>
</dbReference>
<dbReference type="SUPFAM" id="SSF54826">
    <property type="entry name" value="Enolase N-terminal domain-like"/>
    <property type="match status" value="1"/>
</dbReference>
<dbReference type="PROSITE" id="PS00164">
    <property type="entry name" value="ENOLASE"/>
    <property type="match status" value="1"/>
</dbReference>
<reference key="1">
    <citation type="journal article" date="2006" name="BMC Genomics">
        <title>Complete genome sequence of Shigella flexneri 5b and comparison with Shigella flexneri 2a.</title>
        <authorList>
            <person name="Nie H."/>
            <person name="Yang F."/>
            <person name="Zhang X."/>
            <person name="Yang J."/>
            <person name="Chen L."/>
            <person name="Wang J."/>
            <person name="Xiong Z."/>
            <person name="Peng J."/>
            <person name="Sun L."/>
            <person name="Dong J."/>
            <person name="Xue Y."/>
            <person name="Xu X."/>
            <person name="Chen S."/>
            <person name="Yao Z."/>
            <person name="Shen Y."/>
            <person name="Jin Q."/>
        </authorList>
    </citation>
    <scope>NUCLEOTIDE SEQUENCE [LARGE SCALE GENOMIC DNA]</scope>
    <source>
        <strain>8401</strain>
    </source>
</reference>
<protein>
    <recommendedName>
        <fullName evidence="1">Enolase</fullName>
        <ecNumber evidence="1">4.2.1.11</ecNumber>
    </recommendedName>
    <alternativeName>
        <fullName evidence="1">2-phospho-D-glycerate hydro-lyase</fullName>
    </alternativeName>
    <alternativeName>
        <fullName evidence="1">2-phosphoglycerate dehydratase</fullName>
    </alternativeName>
</protein>
<sequence length="431" mass="45692">MSKIVKIIGREIIDSRGNPTVEAEVHLEGGFVGMAAAPSGASTGSREALELRDGDKSRFLGKGVTKAVAAVNGPIAQALIGKDAKDQAGIDKIMIDLDGTENKSKFGANAILAVSLANAKAAAAAKGMPLYEHIAELNGTPGKYSMPVPMMNIINGGEHADNNVDIQEFMIQPVGAKTVKEAIRMGSEVFHHLAKVLKAKGMNTAVGDEGGYAPNLGSNAEALAVIAEAVKAAGYELGKDITLAMDCAASEFYKDGKYVLAGEGNKAFTSEEFTHFLEELTKQYPIVSIEDGLDESDWDGFAYQTKFWRQNPAGCDDLFVTNTKILKEGIEKGIANSILIKFNQIGSLTETLAAIKMAKDAGYTAVISHRSGETEDATIADLAVGTAAGQIKTGSMSRSDRVAKYNQLIRIEEALGEKAPYNGRKEIKGQA</sequence>
<comment type="function">
    <text evidence="1">Catalyzes the reversible conversion of 2-phosphoglycerate (2-PG) into phosphoenolpyruvate (PEP). It is essential for the degradation of carbohydrates via glycolysis.</text>
</comment>
<comment type="catalytic activity">
    <reaction evidence="1">
        <text>(2R)-2-phosphoglycerate = phosphoenolpyruvate + H2O</text>
        <dbReference type="Rhea" id="RHEA:10164"/>
        <dbReference type="ChEBI" id="CHEBI:15377"/>
        <dbReference type="ChEBI" id="CHEBI:58289"/>
        <dbReference type="ChEBI" id="CHEBI:58702"/>
        <dbReference type="EC" id="4.2.1.11"/>
    </reaction>
</comment>
<comment type="cofactor">
    <cofactor evidence="1">
        <name>Mg(2+)</name>
        <dbReference type="ChEBI" id="CHEBI:18420"/>
    </cofactor>
    <text evidence="1">Binds a second Mg(2+) ion via substrate during catalysis.</text>
</comment>
<comment type="pathway">
    <text evidence="1">Carbohydrate degradation; glycolysis; pyruvate from D-glyceraldehyde 3-phosphate: step 4/5.</text>
</comment>
<comment type="subunit">
    <text evidence="1">Component of the RNA degradosome, a multiprotein complex involved in RNA processing and mRNA degradation.</text>
</comment>
<comment type="subcellular location">
    <subcellularLocation>
        <location evidence="1">Cytoplasm</location>
    </subcellularLocation>
    <subcellularLocation>
        <location evidence="1">Secreted</location>
    </subcellularLocation>
    <subcellularLocation>
        <location evidence="1">Cell surface</location>
    </subcellularLocation>
    <text evidence="1">Fractions of enolase are present in both the cytoplasm and on the cell surface.</text>
</comment>
<comment type="similarity">
    <text evidence="1">Belongs to the enolase family.</text>
</comment>
<proteinExistence type="inferred from homology"/>
<feature type="chain" id="PRO_0000280876" description="Enolase">
    <location>
        <begin position="1"/>
        <end position="431"/>
    </location>
</feature>
<feature type="active site" description="Proton donor" evidence="1">
    <location>
        <position position="209"/>
    </location>
</feature>
<feature type="active site" description="Proton acceptor" evidence="1">
    <location>
        <position position="341"/>
    </location>
</feature>
<feature type="binding site" evidence="1">
    <location>
        <position position="167"/>
    </location>
    <ligand>
        <name>(2R)-2-phosphoglycerate</name>
        <dbReference type="ChEBI" id="CHEBI:58289"/>
    </ligand>
</feature>
<feature type="binding site" evidence="1">
    <location>
        <position position="246"/>
    </location>
    <ligand>
        <name>Mg(2+)</name>
        <dbReference type="ChEBI" id="CHEBI:18420"/>
    </ligand>
</feature>
<feature type="binding site" evidence="1">
    <location>
        <position position="290"/>
    </location>
    <ligand>
        <name>Mg(2+)</name>
        <dbReference type="ChEBI" id="CHEBI:18420"/>
    </ligand>
</feature>
<feature type="binding site" evidence="1">
    <location>
        <position position="316"/>
    </location>
    <ligand>
        <name>Mg(2+)</name>
        <dbReference type="ChEBI" id="CHEBI:18420"/>
    </ligand>
</feature>
<feature type="binding site" evidence="1">
    <location>
        <position position="341"/>
    </location>
    <ligand>
        <name>(2R)-2-phosphoglycerate</name>
        <dbReference type="ChEBI" id="CHEBI:58289"/>
    </ligand>
</feature>
<feature type="binding site" evidence="1">
    <location>
        <position position="370"/>
    </location>
    <ligand>
        <name>(2R)-2-phosphoglycerate</name>
        <dbReference type="ChEBI" id="CHEBI:58289"/>
    </ligand>
</feature>
<feature type="binding site" evidence="1">
    <location>
        <position position="371"/>
    </location>
    <ligand>
        <name>(2R)-2-phosphoglycerate</name>
        <dbReference type="ChEBI" id="CHEBI:58289"/>
    </ligand>
</feature>
<feature type="binding site" evidence="1">
    <location>
        <position position="392"/>
    </location>
    <ligand>
        <name>(2R)-2-phosphoglycerate</name>
        <dbReference type="ChEBI" id="CHEBI:58289"/>
    </ligand>
</feature>
<gene>
    <name evidence="1" type="primary">eno</name>
    <name type="ordered locus">SFV_2676</name>
</gene>
<name>ENO_SHIF8</name>
<keyword id="KW-0963">Cytoplasm</keyword>
<keyword id="KW-0324">Glycolysis</keyword>
<keyword id="KW-0456">Lyase</keyword>
<keyword id="KW-0460">Magnesium</keyword>
<keyword id="KW-0479">Metal-binding</keyword>
<keyword id="KW-0964">Secreted</keyword>
<evidence type="ECO:0000255" key="1">
    <source>
        <dbReference type="HAMAP-Rule" id="MF_00318"/>
    </source>
</evidence>
<organism>
    <name type="scientific">Shigella flexneri serotype 5b (strain 8401)</name>
    <dbReference type="NCBI Taxonomy" id="373384"/>
    <lineage>
        <taxon>Bacteria</taxon>
        <taxon>Pseudomonadati</taxon>
        <taxon>Pseudomonadota</taxon>
        <taxon>Gammaproteobacteria</taxon>
        <taxon>Enterobacterales</taxon>
        <taxon>Enterobacteriaceae</taxon>
        <taxon>Shigella</taxon>
    </lineage>
</organism>